<reference key="1">
    <citation type="journal article" date="1990" name="J. Biol. Chem.">
        <title>The flavin-containing monooxygenase enzymes expressed in rabbit liver and lung are products of related but distinctly different genes.</title>
        <authorList>
            <person name="Lawton M.P."/>
            <person name="Gasser R."/>
            <person name="Tynes R.E."/>
            <person name="Hodgson E."/>
            <person name="Philpot R.M."/>
        </authorList>
    </citation>
    <scope>NUCLEOTIDE SEQUENCE [MRNA]</scope>
    <source>
        <strain>New Zealand white</strain>
    </source>
</reference>
<reference key="2">
    <citation type="journal article" date="1990" name="J. Biol. Chem.">
        <title>Covalent structure of liver microsomal flavin-containing monooxygenase form 1.</title>
        <authorList>
            <person name="Ozols J."/>
        </authorList>
    </citation>
    <scope>PROTEIN SEQUENCE OF 2-535</scope>
    <scope>ACETYLATION AT ALA-2</scope>
    <source>
        <tissue>Liver</tissue>
    </source>
</reference>
<reference key="3">
    <citation type="journal article" date="1989" name="Biochem. Biophys. Res. Commun.">
        <title>Liver microsomes contain two distinct NADPH-Monooxygenases with NH2-terminal segments homologous to the flavin containing NADPH-monooxygenase of Pseudomonas fluorescens.</title>
        <authorList>
            <person name="Ozols J."/>
        </authorList>
    </citation>
    <scope>PROTEIN SEQUENCE OF 4-33 AND 224-247</scope>
    <scope>SUBCELLULAR LOCATION</scope>
    <scope>TISSUE SPECIFICITY</scope>
    <source>
        <tissue>Liver</tissue>
    </source>
</reference>
<sequence>MAKRVAIVGAGVSGLASIKCCLEEGLEPTCFERSDDLGGLWRFTEHVEEGRASLYKSVVSNSCKEMSCYSDFPFPEDYPNYVPNSQFLDYLKMYADRFSLLKSIQFKTTVFSITKCQDFNVSGQWEVVTLHEGKQESAIFDAVMVCTGFLTNPHLPLGCFPGIKTFKGQYFHSRQYKHPDIFKDKRVLVVGMGNSGTDIAVEASHVAKKVFLSTTGGAWVISRVFDSGYPWDMVFTTRFQNFIRNSLPTPIVTWLVAKKMNSWFNHANYGLVPKDRIQLKEPVLNDELPGRIITGKVFIRPSIKEVKENSVVFGNAHNTPSEEPIDVIVFATGYTFAFPFLDESVVKVEDGQASLYKYIFPAHLQKPTLAVIGLIKPLGSMLPTGETQARYTVQVFKGVIKLPPTSVMIKEVNERKENKHNGFGLCYCKALQADYITYIDDLLTSINAKPNLFSLLLTDPLLALTMFFGPYSPYQFRLTGPGKWKGARNAIMTQWDRTFKVTKTRIVQESSSPFESLLKLFAVLALLVSVFLIFL</sequence>
<evidence type="ECO:0000250" key="1">
    <source>
        <dbReference type="UniProtKB" id="P16549"/>
    </source>
</evidence>
<evidence type="ECO:0000250" key="2">
    <source>
        <dbReference type="UniProtKB" id="P36365"/>
    </source>
</evidence>
<evidence type="ECO:0000250" key="3">
    <source>
        <dbReference type="UniProtKB" id="Q01740"/>
    </source>
</evidence>
<evidence type="ECO:0000250" key="4">
    <source>
        <dbReference type="UniProtKB" id="Q9HFE4"/>
    </source>
</evidence>
<evidence type="ECO:0000255" key="5"/>
<evidence type="ECO:0000269" key="6">
    <source>
    </source>
</evidence>
<evidence type="ECO:0000269" key="7">
    <source>
    </source>
</evidence>
<evidence type="ECO:0000305" key="8"/>
<gene>
    <name type="primary">FMO1</name>
</gene>
<dbReference type="EC" id="1.14.13.148" evidence="2"/>
<dbReference type="EC" id="1.14.13.8" evidence="3"/>
<dbReference type="EMBL" id="M32030">
    <property type="protein sequence ID" value="AAA31278.1"/>
    <property type="molecule type" value="mRNA"/>
</dbReference>
<dbReference type="PIR" id="A35182">
    <property type="entry name" value="A35182"/>
</dbReference>
<dbReference type="PIR" id="A35427">
    <property type="entry name" value="A35427"/>
</dbReference>
<dbReference type="RefSeq" id="NP_001075754.1">
    <property type="nucleotide sequence ID" value="NM_001082285.2"/>
</dbReference>
<dbReference type="SMR" id="P17636"/>
<dbReference type="FunCoup" id="P17636">
    <property type="interactions" value="360"/>
</dbReference>
<dbReference type="STRING" id="9986.ENSOCUP00000018588"/>
<dbReference type="iPTMnet" id="P17636"/>
<dbReference type="PaxDb" id="9986-ENSOCUP00000018588"/>
<dbReference type="GeneID" id="100009120"/>
<dbReference type="KEGG" id="ocu:100009120"/>
<dbReference type="CTD" id="2326"/>
<dbReference type="eggNOG" id="KOG1399">
    <property type="taxonomic scope" value="Eukaryota"/>
</dbReference>
<dbReference type="InParanoid" id="P17636"/>
<dbReference type="OrthoDB" id="66881at2759"/>
<dbReference type="Proteomes" id="UP000001811">
    <property type="component" value="Unplaced"/>
</dbReference>
<dbReference type="GO" id="GO:0005789">
    <property type="term" value="C:endoplasmic reticulum membrane"/>
    <property type="evidence" value="ECO:0000250"/>
    <property type="project" value="UniProtKB"/>
</dbReference>
<dbReference type="GO" id="GO:0050660">
    <property type="term" value="F:flavin adenine dinucleotide binding"/>
    <property type="evidence" value="ECO:0007669"/>
    <property type="project" value="InterPro"/>
</dbReference>
<dbReference type="GO" id="GO:0047822">
    <property type="term" value="F:hypotaurine monooxygenase activity"/>
    <property type="evidence" value="ECO:0000250"/>
    <property type="project" value="UniProtKB"/>
</dbReference>
<dbReference type="GO" id="GO:0004499">
    <property type="term" value="F:N,N-dimethylaniline monooxygenase activity"/>
    <property type="evidence" value="ECO:0007669"/>
    <property type="project" value="InterPro"/>
</dbReference>
<dbReference type="GO" id="GO:0050661">
    <property type="term" value="F:NADP binding"/>
    <property type="evidence" value="ECO:0007669"/>
    <property type="project" value="InterPro"/>
</dbReference>
<dbReference type="GO" id="GO:0034899">
    <property type="term" value="F:trimethylamine monooxygenase activity"/>
    <property type="evidence" value="ECO:0000250"/>
    <property type="project" value="UniProtKB"/>
</dbReference>
<dbReference type="GO" id="GO:0042412">
    <property type="term" value="P:taurine biosynthetic process"/>
    <property type="evidence" value="ECO:0000250"/>
    <property type="project" value="UniProtKB"/>
</dbReference>
<dbReference type="FunFam" id="3.50.50.60:FF:000159">
    <property type="entry name" value="Dimethylaniline monooxygenase [N-oxide-forming]"/>
    <property type="match status" value="1"/>
</dbReference>
<dbReference type="Gene3D" id="3.50.50.60">
    <property type="entry name" value="FAD/NAD(P)-binding domain"/>
    <property type="match status" value="1"/>
</dbReference>
<dbReference type="InterPro" id="IPR036188">
    <property type="entry name" value="FAD/NAD-bd_sf"/>
</dbReference>
<dbReference type="InterPro" id="IPR000960">
    <property type="entry name" value="Flavin_mOase"/>
</dbReference>
<dbReference type="InterPro" id="IPR020946">
    <property type="entry name" value="Flavin_mOase-like"/>
</dbReference>
<dbReference type="InterPro" id="IPR002253">
    <property type="entry name" value="Flavin_mOase_1"/>
</dbReference>
<dbReference type="InterPro" id="IPR050346">
    <property type="entry name" value="FMO-like"/>
</dbReference>
<dbReference type="PANTHER" id="PTHR23023">
    <property type="entry name" value="DIMETHYLANILINE MONOOXYGENASE"/>
    <property type="match status" value="1"/>
</dbReference>
<dbReference type="Pfam" id="PF00743">
    <property type="entry name" value="FMO-like"/>
    <property type="match status" value="1"/>
</dbReference>
<dbReference type="PIRSF" id="PIRSF000332">
    <property type="entry name" value="FMO"/>
    <property type="match status" value="1"/>
</dbReference>
<dbReference type="PRINTS" id="PR00370">
    <property type="entry name" value="FMOXYGENASE"/>
</dbReference>
<dbReference type="PRINTS" id="PR01121">
    <property type="entry name" value="FMOXYGENASE1"/>
</dbReference>
<dbReference type="SUPFAM" id="SSF51905">
    <property type="entry name" value="FAD/NAD(P)-binding domain"/>
    <property type="match status" value="3"/>
</dbReference>
<proteinExistence type="evidence at protein level"/>
<accession>P17636</accession>
<name>FMO1_RABIT</name>
<feature type="initiator methionine" description="Removed" evidence="6">
    <location>
        <position position="1"/>
    </location>
</feature>
<feature type="chain" id="PRO_0000147642" description="Flavin-containing monooxygenase 1">
    <location>
        <begin position="2"/>
        <end position="535"/>
    </location>
</feature>
<feature type="topological domain" description="Lumenal" evidence="1">
    <location>
        <begin position="2"/>
        <end position="513"/>
    </location>
</feature>
<feature type="transmembrane region" description="Helical" evidence="5">
    <location>
        <begin position="514"/>
        <end position="534"/>
    </location>
</feature>
<feature type="topological domain" description="Cytoplasmic" evidence="1">
    <location>
        <position position="535"/>
    </location>
</feature>
<feature type="binding site" evidence="4">
    <location>
        <begin position="9"/>
        <end position="13"/>
    </location>
    <ligand>
        <name>FAD</name>
        <dbReference type="ChEBI" id="CHEBI:57692"/>
    </ligand>
</feature>
<feature type="binding site" evidence="4">
    <location>
        <position position="32"/>
    </location>
    <ligand>
        <name>FAD</name>
        <dbReference type="ChEBI" id="CHEBI:57692"/>
    </ligand>
</feature>
<feature type="binding site" evidence="4">
    <location>
        <begin position="40"/>
        <end position="41"/>
    </location>
    <ligand>
        <name>FAD</name>
        <dbReference type="ChEBI" id="CHEBI:57692"/>
    </ligand>
</feature>
<feature type="binding site" evidence="4">
    <location>
        <begin position="60"/>
        <end position="61"/>
    </location>
    <ligand>
        <name>NADP(+)</name>
        <dbReference type="ChEBI" id="CHEBI:58349"/>
    </ligand>
</feature>
<feature type="binding site" evidence="4">
    <location>
        <begin position="61"/>
        <end position="62"/>
    </location>
    <ligand>
        <name>FAD</name>
        <dbReference type="ChEBI" id="CHEBI:57692"/>
    </ligand>
</feature>
<feature type="binding site" evidence="4">
    <location>
        <begin position="195"/>
        <end position="198"/>
    </location>
    <ligand>
        <name>NADP(+)</name>
        <dbReference type="ChEBI" id="CHEBI:58349"/>
    </ligand>
</feature>
<feature type="site" description="Important for substrate binding" evidence="1">
    <location>
        <position position="208"/>
    </location>
</feature>
<feature type="modified residue" description="N-acetylalanine" evidence="6">
    <location>
        <position position="2"/>
    </location>
</feature>
<feature type="sequence conflict" description="In Ref. 2; AA sequence and 3; AA sequence." evidence="8" ref="2 3">
    <original>C</original>
    <variation>S</variation>
    <location>
        <position position="20"/>
    </location>
</feature>
<feature type="sequence conflict" description="In Ref. 2; AA sequence and 3; AA sequence." evidence="8" ref="2 3">
    <original>E</original>
    <variation>K</variation>
    <location>
        <position position="27"/>
    </location>
</feature>
<feature type="sequence conflict" description="In Ref. 2; AA sequence." evidence="8" ref="2">
    <original>S</original>
    <variation>D</variation>
    <location>
        <position position="99"/>
    </location>
</feature>
<feature type="sequence conflict" description="In Ref. 2; AA sequence." evidence="8" ref="2">
    <original>S</original>
    <variation>E</variation>
    <location>
        <position position="103"/>
    </location>
</feature>
<feature type="sequence conflict" description="In Ref. 2; AA sequence." evidence="8" ref="2">
    <original>C</original>
    <variation>E</variation>
    <location>
        <position position="116"/>
    </location>
</feature>
<feature type="sequence conflict" description="In Ref. 2; AA sequence." evidence="8" ref="2">
    <original>E</original>
    <variation>K</variation>
    <location>
        <position position="126"/>
    </location>
</feature>
<feature type="sequence conflict" description="In Ref. 2; AA sequence." evidence="8" ref="2">
    <original>L</original>
    <variation>M</variation>
    <location>
        <position position="279"/>
    </location>
</feature>
<feature type="sequence conflict" description="In Ref. 2; AA sequence." evidence="8" ref="2">
    <original>F</original>
    <variation>S</variation>
    <location>
        <position position="340"/>
    </location>
</feature>
<feature type="sequence conflict" description="In Ref. 2; AA sequence." evidence="8" ref="2">
    <original>S</original>
    <variation>C</variation>
    <location>
        <position position="406"/>
    </location>
</feature>
<feature type="sequence conflict" description="In Ref. 2; AA sequence." evidence="8" ref="2">
    <original>L</original>
    <variation>S</variation>
    <location>
        <position position="455"/>
    </location>
</feature>
<feature type="sequence conflict" description="In Ref. 2; AA sequence." evidence="8" ref="2">
    <original>L</original>
    <variation>G</variation>
    <location>
        <position position="457"/>
    </location>
</feature>
<feature type="sequence conflict" description="In Ref. 2; AA sequence." evidence="8" ref="2">
    <original>L</original>
    <variation>LES</variation>
    <location>
        <position position="535"/>
    </location>
</feature>
<keyword id="KW-0007">Acetylation</keyword>
<keyword id="KW-0903">Direct protein sequencing</keyword>
<keyword id="KW-0256">Endoplasmic reticulum</keyword>
<keyword id="KW-0274">FAD</keyword>
<keyword id="KW-0285">Flavoprotein</keyword>
<keyword id="KW-0472">Membrane</keyword>
<keyword id="KW-0503">Monooxygenase</keyword>
<keyword id="KW-0521">NADP</keyword>
<keyword id="KW-0560">Oxidoreductase</keyword>
<keyword id="KW-1185">Reference proteome</keyword>
<keyword id="KW-0812">Transmembrane</keyword>
<keyword id="KW-1133">Transmembrane helix</keyword>
<protein>
    <recommendedName>
        <fullName evidence="8">Flavin-containing monooxygenase 1</fullName>
        <ecNumber evidence="2">1.14.13.148</ecNumber>
        <ecNumber evidence="3">1.14.13.8</ecNumber>
    </recommendedName>
    <alternativeName>
        <fullName>Dimethylaniline monooxygenase [N-oxide-forming] 1</fullName>
    </alternativeName>
    <alternativeName>
        <fullName>Dimethylaniline oxidase 1</fullName>
    </alternativeName>
    <alternativeName>
        <fullName>FMO 1A1</fullName>
    </alternativeName>
    <alternativeName>
        <fullName>FMO form 1</fullName>
        <shortName>FMO 1</shortName>
    </alternativeName>
    <alternativeName>
        <fullName>Hepatic flavin-containing monooxygenase 1</fullName>
    </alternativeName>
    <alternativeName>
        <fullName evidence="8">Trimethylamine monooxygenase</fullName>
    </alternativeName>
</protein>
<comment type="function">
    <text evidence="2 3">Broad spectrum monooxygenase that catalyzes the oxygenation of a wide variety of nitrogen- and sulfur-containing compounds including xenobiotics (By similarity). Catalyzes the S-oxygenation of hypotaurine to produce taurine, an organic osmolyte involved in cell volume regulation as well as a variety of cytoprotective and developmental processes (By similarity). In vitro, catalyzes the N-oxygenation of trimethylamine (TMA) to produce trimethylamine N-oxide (TMAO) and could therefore participate to the detoxification of this compound that is generated by the action of gut microbiota from dietary precursors such as choline, choline containing compounds, betaine or L-carnitine (By similarity).</text>
</comment>
<comment type="catalytic activity">
    <reaction evidence="3">
        <text>hypotaurine + NADPH + O2 + H(+) = taurine + NADP(+) + H2O</text>
        <dbReference type="Rhea" id="RHEA:69819"/>
        <dbReference type="ChEBI" id="CHEBI:15377"/>
        <dbReference type="ChEBI" id="CHEBI:15378"/>
        <dbReference type="ChEBI" id="CHEBI:15379"/>
        <dbReference type="ChEBI" id="CHEBI:57783"/>
        <dbReference type="ChEBI" id="CHEBI:57853"/>
        <dbReference type="ChEBI" id="CHEBI:58349"/>
        <dbReference type="ChEBI" id="CHEBI:507393"/>
        <dbReference type="EC" id="1.14.13.8"/>
    </reaction>
    <physiologicalReaction direction="left-to-right" evidence="3">
        <dbReference type="Rhea" id="RHEA:69820"/>
    </physiologicalReaction>
</comment>
<comment type="catalytic activity">
    <reaction evidence="3">
        <text>hypotaurine + NADH + O2 + H(+) = taurine + NAD(+) + H2O</text>
        <dbReference type="Rhea" id="RHEA:74111"/>
        <dbReference type="ChEBI" id="CHEBI:15377"/>
        <dbReference type="ChEBI" id="CHEBI:15378"/>
        <dbReference type="ChEBI" id="CHEBI:15379"/>
        <dbReference type="ChEBI" id="CHEBI:57540"/>
        <dbReference type="ChEBI" id="CHEBI:57853"/>
        <dbReference type="ChEBI" id="CHEBI:57945"/>
        <dbReference type="ChEBI" id="CHEBI:507393"/>
        <dbReference type="EC" id="1.14.13.8"/>
    </reaction>
    <physiologicalReaction direction="left-to-right" evidence="3">
        <dbReference type="Rhea" id="RHEA:74112"/>
    </physiologicalReaction>
</comment>
<comment type="catalytic activity">
    <reaction evidence="2">
        <text>trimethylamine + NADPH + O2 = trimethylamine N-oxide + NADP(+) + H2O</text>
        <dbReference type="Rhea" id="RHEA:31979"/>
        <dbReference type="ChEBI" id="CHEBI:15377"/>
        <dbReference type="ChEBI" id="CHEBI:15379"/>
        <dbReference type="ChEBI" id="CHEBI:15724"/>
        <dbReference type="ChEBI" id="CHEBI:57783"/>
        <dbReference type="ChEBI" id="CHEBI:58349"/>
        <dbReference type="ChEBI" id="CHEBI:58389"/>
        <dbReference type="EC" id="1.14.13.148"/>
    </reaction>
    <physiologicalReaction direction="left-to-right" evidence="2">
        <dbReference type="Rhea" id="RHEA:31980"/>
    </physiologicalReaction>
</comment>
<comment type="catalytic activity">
    <reaction evidence="2">
        <text>N,N-dimethylaniline + NADPH + O2 + H(+) = N,N-dimethylaniline N-oxide + NADP(+) + H2O</text>
        <dbReference type="Rhea" id="RHEA:24468"/>
        <dbReference type="ChEBI" id="CHEBI:15377"/>
        <dbReference type="ChEBI" id="CHEBI:15378"/>
        <dbReference type="ChEBI" id="CHEBI:15379"/>
        <dbReference type="ChEBI" id="CHEBI:16269"/>
        <dbReference type="ChEBI" id="CHEBI:17735"/>
        <dbReference type="ChEBI" id="CHEBI:57783"/>
        <dbReference type="ChEBI" id="CHEBI:58349"/>
        <dbReference type="EC" id="1.14.13.8"/>
    </reaction>
    <physiologicalReaction direction="left-to-right" evidence="2">
        <dbReference type="Rhea" id="RHEA:24469"/>
    </physiologicalReaction>
</comment>
<comment type="cofactor">
    <cofactor evidence="3">
        <name>FAD</name>
        <dbReference type="ChEBI" id="CHEBI:57692"/>
    </cofactor>
</comment>
<comment type="subcellular location">
    <subcellularLocation>
        <location evidence="7">Endoplasmic reticulum membrane</location>
        <topology evidence="5">Single-pass membrane protein</topology>
    </subcellularLocation>
</comment>
<comment type="tissue specificity">
    <text evidence="7">Liver.</text>
</comment>
<comment type="similarity">
    <text evidence="8">Belongs to the FMO family.</text>
</comment>
<organism>
    <name type="scientific">Oryctolagus cuniculus</name>
    <name type="common">Rabbit</name>
    <dbReference type="NCBI Taxonomy" id="9986"/>
    <lineage>
        <taxon>Eukaryota</taxon>
        <taxon>Metazoa</taxon>
        <taxon>Chordata</taxon>
        <taxon>Craniata</taxon>
        <taxon>Vertebrata</taxon>
        <taxon>Euteleostomi</taxon>
        <taxon>Mammalia</taxon>
        <taxon>Eutheria</taxon>
        <taxon>Euarchontoglires</taxon>
        <taxon>Glires</taxon>
        <taxon>Lagomorpha</taxon>
        <taxon>Leporidae</taxon>
        <taxon>Oryctolagus</taxon>
    </lineage>
</organism>